<accession>B7PS00</accession>
<proteinExistence type="inferred from homology"/>
<dbReference type="EMBL" id="DS775781">
    <property type="protein sequence ID" value="EEC09372.1"/>
    <property type="status" value="ALT_SEQ"/>
    <property type="molecule type" value="Genomic_DNA"/>
</dbReference>
<dbReference type="RefSeq" id="XP_002401479.1">
    <property type="nucleotide sequence ID" value="XM_002401435.1"/>
</dbReference>
<dbReference type="SMR" id="B7PS00"/>
<dbReference type="FunCoup" id="B7PS00">
    <property type="interactions" value="1582"/>
</dbReference>
<dbReference type="STRING" id="6945.B7PS00"/>
<dbReference type="PaxDb" id="6945-B7PS00"/>
<dbReference type="EnsemblMetazoa" id="ISCI007420-RA">
    <property type="protein sequence ID" value="ISCI007420-PA"/>
    <property type="gene ID" value="ISCI007420"/>
</dbReference>
<dbReference type="KEGG" id="isc:8030493"/>
<dbReference type="CTD" id="36791"/>
<dbReference type="VEuPathDB" id="VectorBase:ISCI007420"/>
<dbReference type="VEuPathDB" id="VectorBase:ISCP_022242"/>
<dbReference type="VEuPathDB" id="VectorBase:ISCW007420"/>
<dbReference type="HOGENOM" id="CLU_000288_57_15_1"/>
<dbReference type="InParanoid" id="B7PS00"/>
<dbReference type="OrthoDB" id="674604at2759"/>
<dbReference type="Proteomes" id="UP000001555">
    <property type="component" value="Unassembled WGS sequence"/>
</dbReference>
<dbReference type="GO" id="GO:1904115">
    <property type="term" value="C:axon cytoplasm"/>
    <property type="evidence" value="ECO:0007669"/>
    <property type="project" value="GOC"/>
</dbReference>
<dbReference type="GO" id="GO:0005813">
    <property type="term" value="C:centrosome"/>
    <property type="evidence" value="ECO:0007669"/>
    <property type="project" value="UniProtKB-SubCell"/>
</dbReference>
<dbReference type="GO" id="GO:0005881">
    <property type="term" value="C:cytoplasmic microtubule"/>
    <property type="evidence" value="ECO:0000318"/>
    <property type="project" value="GO_Central"/>
</dbReference>
<dbReference type="GO" id="GO:0000776">
    <property type="term" value="C:kinetochore"/>
    <property type="evidence" value="ECO:0000318"/>
    <property type="project" value="GO_Central"/>
</dbReference>
<dbReference type="GO" id="GO:0005875">
    <property type="term" value="C:microtubule associated complex"/>
    <property type="evidence" value="ECO:0000318"/>
    <property type="project" value="GO_Central"/>
</dbReference>
<dbReference type="GO" id="GO:0043005">
    <property type="term" value="C:neuron projection"/>
    <property type="evidence" value="ECO:0000318"/>
    <property type="project" value="GO_Central"/>
</dbReference>
<dbReference type="GO" id="GO:0043025">
    <property type="term" value="C:neuronal cell body"/>
    <property type="evidence" value="ECO:0000318"/>
    <property type="project" value="GO_Central"/>
</dbReference>
<dbReference type="GO" id="GO:0005635">
    <property type="term" value="C:nuclear envelope"/>
    <property type="evidence" value="ECO:0000318"/>
    <property type="project" value="GO_Central"/>
</dbReference>
<dbReference type="GO" id="GO:1990234">
    <property type="term" value="C:transferase complex"/>
    <property type="evidence" value="ECO:0007669"/>
    <property type="project" value="UniProtKB-ARBA"/>
</dbReference>
<dbReference type="GO" id="GO:0070840">
    <property type="term" value="F:dynein complex binding"/>
    <property type="evidence" value="ECO:0000318"/>
    <property type="project" value="GO_Central"/>
</dbReference>
<dbReference type="GO" id="GO:0051010">
    <property type="term" value="F:microtubule plus-end binding"/>
    <property type="evidence" value="ECO:0000318"/>
    <property type="project" value="GO_Central"/>
</dbReference>
<dbReference type="GO" id="GO:0048854">
    <property type="term" value="P:brain morphogenesis"/>
    <property type="evidence" value="ECO:0000318"/>
    <property type="project" value="GO_Central"/>
</dbReference>
<dbReference type="GO" id="GO:0051301">
    <property type="term" value="P:cell division"/>
    <property type="evidence" value="ECO:0007669"/>
    <property type="project" value="UniProtKB-KW"/>
</dbReference>
<dbReference type="GO" id="GO:0000132">
    <property type="term" value="P:establishment of mitotic spindle orientation"/>
    <property type="evidence" value="ECO:0000318"/>
    <property type="project" value="GO_Central"/>
</dbReference>
<dbReference type="GO" id="GO:0007281">
    <property type="term" value="P:germ cell development"/>
    <property type="evidence" value="ECO:0000318"/>
    <property type="project" value="GO_Central"/>
</dbReference>
<dbReference type="GO" id="GO:0031023">
    <property type="term" value="P:microtubule organizing center organization"/>
    <property type="evidence" value="ECO:0000318"/>
    <property type="project" value="GO_Central"/>
</dbReference>
<dbReference type="GO" id="GO:0051012">
    <property type="term" value="P:microtubule sliding"/>
    <property type="evidence" value="ECO:0007669"/>
    <property type="project" value="UniProtKB-UniRule"/>
</dbReference>
<dbReference type="GO" id="GO:0007097">
    <property type="term" value="P:nuclear migration"/>
    <property type="evidence" value="ECO:0000318"/>
    <property type="project" value="GO_Central"/>
</dbReference>
<dbReference type="GO" id="GO:0008090">
    <property type="term" value="P:retrograde axonal transport"/>
    <property type="evidence" value="ECO:0000318"/>
    <property type="project" value="GO_Central"/>
</dbReference>
<dbReference type="GO" id="GO:0047496">
    <property type="term" value="P:vesicle transport along microtubule"/>
    <property type="evidence" value="ECO:0000318"/>
    <property type="project" value="GO_Central"/>
</dbReference>
<dbReference type="CDD" id="cd00200">
    <property type="entry name" value="WD40"/>
    <property type="match status" value="1"/>
</dbReference>
<dbReference type="FunFam" id="2.130.10.10:FF:000038">
    <property type="entry name" value="Lissencephaly-1 homolog B"/>
    <property type="match status" value="1"/>
</dbReference>
<dbReference type="FunFam" id="1.20.960.30:FF:000002">
    <property type="entry name" value="Platelet-activating factor acetylhydrolase ib"/>
    <property type="match status" value="1"/>
</dbReference>
<dbReference type="Gene3D" id="1.20.960.30">
    <property type="match status" value="1"/>
</dbReference>
<dbReference type="Gene3D" id="2.130.10.10">
    <property type="entry name" value="YVTN repeat-like/Quinoprotein amine dehydrogenase"/>
    <property type="match status" value="1"/>
</dbReference>
<dbReference type="HAMAP" id="MF_03141">
    <property type="entry name" value="lis1"/>
    <property type="match status" value="1"/>
</dbReference>
<dbReference type="InterPro" id="IPR017252">
    <property type="entry name" value="Dynein_regulator_LIS1"/>
</dbReference>
<dbReference type="InterPro" id="IPR020472">
    <property type="entry name" value="G-protein_beta_WD-40_rep"/>
</dbReference>
<dbReference type="InterPro" id="IPR037190">
    <property type="entry name" value="LIS1_N"/>
</dbReference>
<dbReference type="InterPro" id="IPR006594">
    <property type="entry name" value="LisH"/>
</dbReference>
<dbReference type="InterPro" id="IPR056795">
    <property type="entry name" value="PAC1-like_LisH-like_dom"/>
</dbReference>
<dbReference type="InterPro" id="IPR015943">
    <property type="entry name" value="WD40/YVTN_repeat-like_dom_sf"/>
</dbReference>
<dbReference type="InterPro" id="IPR019775">
    <property type="entry name" value="WD40_repeat_CS"/>
</dbReference>
<dbReference type="InterPro" id="IPR036322">
    <property type="entry name" value="WD40_repeat_dom_sf"/>
</dbReference>
<dbReference type="InterPro" id="IPR001680">
    <property type="entry name" value="WD40_rpt"/>
</dbReference>
<dbReference type="PANTHER" id="PTHR22847:SF637">
    <property type="entry name" value="WD REPEAT DOMAIN 5B"/>
    <property type="match status" value="1"/>
</dbReference>
<dbReference type="PANTHER" id="PTHR22847">
    <property type="entry name" value="WD40 REPEAT PROTEIN"/>
    <property type="match status" value="1"/>
</dbReference>
<dbReference type="Pfam" id="PF24951">
    <property type="entry name" value="LisH_PAC1"/>
    <property type="match status" value="1"/>
</dbReference>
<dbReference type="Pfam" id="PF00400">
    <property type="entry name" value="WD40"/>
    <property type="match status" value="7"/>
</dbReference>
<dbReference type="PIRSF" id="PIRSF037647">
    <property type="entry name" value="Dynein_regulator_Lis1"/>
    <property type="match status" value="1"/>
</dbReference>
<dbReference type="PRINTS" id="PR00320">
    <property type="entry name" value="GPROTEINBRPT"/>
</dbReference>
<dbReference type="SMART" id="SM00667">
    <property type="entry name" value="LisH"/>
    <property type="match status" value="1"/>
</dbReference>
<dbReference type="SMART" id="SM00320">
    <property type="entry name" value="WD40"/>
    <property type="match status" value="7"/>
</dbReference>
<dbReference type="SUPFAM" id="SSF109925">
    <property type="entry name" value="Lissencephaly-1 protein (Lis-1, PAF-AH alpha) N-terminal domain"/>
    <property type="match status" value="1"/>
</dbReference>
<dbReference type="SUPFAM" id="SSF50978">
    <property type="entry name" value="WD40 repeat-like"/>
    <property type="match status" value="1"/>
</dbReference>
<dbReference type="PROSITE" id="PS50896">
    <property type="entry name" value="LISH"/>
    <property type="match status" value="1"/>
</dbReference>
<dbReference type="PROSITE" id="PS00678">
    <property type="entry name" value="WD_REPEATS_1"/>
    <property type="match status" value="5"/>
</dbReference>
<dbReference type="PROSITE" id="PS50082">
    <property type="entry name" value="WD_REPEATS_2"/>
    <property type="match status" value="7"/>
</dbReference>
<dbReference type="PROSITE" id="PS50294">
    <property type="entry name" value="WD_REPEATS_REGION"/>
    <property type="match status" value="1"/>
</dbReference>
<organism>
    <name type="scientific">Ixodes scapularis</name>
    <name type="common">Black-legged tick</name>
    <name type="synonym">Deer tick</name>
    <dbReference type="NCBI Taxonomy" id="6945"/>
    <lineage>
        <taxon>Eukaryota</taxon>
        <taxon>Metazoa</taxon>
        <taxon>Ecdysozoa</taxon>
        <taxon>Arthropoda</taxon>
        <taxon>Chelicerata</taxon>
        <taxon>Arachnida</taxon>
        <taxon>Acari</taxon>
        <taxon>Parasitiformes</taxon>
        <taxon>Ixodida</taxon>
        <taxon>Ixodoidea</taxon>
        <taxon>Ixodidae</taxon>
        <taxon>Ixodinae</taxon>
        <taxon>Ixodes</taxon>
    </lineage>
</organism>
<keyword id="KW-0131">Cell cycle</keyword>
<keyword id="KW-0132">Cell division</keyword>
<keyword id="KW-0175">Coiled coil</keyword>
<keyword id="KW-0963">Cytoplasm</keyword>
<keyword id="KW-0206">Cytoskeleton</keyword>
<keyword id="KW-0493">Microtubule</keyword>
<keyword id="KW-0498">Mitosis</keyword>
<keyword id="KW-1185">Reference proteome</keyword>
<keyword id="KW-0677">Repeat</keyword>
<keyword id="KW-0813">Transport</keyword>
<keyword id="KW-0853">WD repeat</keyword>
<name>LIS1_IXOSC</name>
<evidence type="ECO:0000255" key="1">
    <source>
        <dbReference type="HAMAP-Rule" id="MF_03141"/>
    </source>
</evidence>
<evidence type="ECO:0000256" key="2">
    <source>
        <dbReference type="SAM" id="MobiDB-lite"/>
    </source>
</evidence>
<evidence type="ECO:0000305" key="3"/>
<sequence>MVLSQRQREELNKAIADYLASNGFMEALESFKKETDMPGDIDKKYAGLLEKKWTSVIRLQKKVMDLEGRLAEAEKEYISGTPSREKRSPTEWIPRPPERSALLGHRAPITRVLFHPVYSVVVSASEDASIKVWDYETGDFERTIKGHTDSVQDIAFDHTGQFLASCSADMTIKLWDFKSYECLRTMHGHDHNVSSVCFLPSGDHVVSCSRDKSIKMWEVATGYCVRTFTGHRDWVRMVRVNSDGSLLASCSNDQTVRVWVVGTKECKLELREHDHVVECVAWAPAHAQLCGAAGDSNRRPGAGGAQGTGPFLVSGSRDKTIKVWDVSTGLALFTLVGHDNWVRGVKFHPGGKYLLSASDDKTLRVWELAHQRCCKTLDAHSHFCTSLDFHRTAPYVVTGSVDQTVKVWECR</sequence>
<comment type="function">
    <text evidence="1">Positively regulates the activity of the minus-end directed microtubule motor protein dynein. May enhance dynein-mediated microtubule sliding by targeting dynein to the microtubule plus end. Required for several dynein- and microtubule-dependent processes.</text>
</comment>
<comment type="subcellular location">
    <subcellularLocation>
        <location evidence="1">Cytoplasm</location>
        <location evidence="1">Cytoskeleton</location>
    </subcellularLocation>
    <subcellularLocation>
        <location evidence="1">Cytoplasm</location>
        <location evidence="1">Cytoskeleton</location>
        <location evidence="1">Microtubule organizing center</location>
        <location evidence="1">Centrosome</location>
    </subcellularLocation>
    <text evidence="1">Localizes to the plus end of microtubules and to the centrosome.</text>
</comment>
<comment type="domain">
    <text evidence="1">Dimerization mediated by the LisH domain may be required to activate dynein.</text>
</comment>
<comment type="similarity">
    <text evidence="1">Belongs to the WD repeat LIS1/nudF family.</text>
</comment>
<comment type="sequence caution" evidence="3">
    <conflict type="erroneous gene model prediction">
        <sequence resource="EMBL-CDS" id="EEC09372"/>
    </conflict>
</comment>
<protein>
    <recommendedName>
        <fullName evidence="1">Lissencephaly-1 homolog</fullName>
    </recommendedName>
</protein>
<gene>
    <name type="ORF">IscW_ISCW007420</name>
</gene>
<feature type="chain" id="PRO_0000405052" description="Lissencephaly-1 homolog">
    <location>
        <begin position="1"/>
        <end position="411"/>
    </location>
</feature>
<feature type="domain" description="LisH" evidence="1">
    <location>
        <begin position="7"/>
        <end position="39"/>
    </location>
</feature>
<feature type="repeat" description="WD 1">
    <location>
        <begin position="104"/>
        <end position="145"/>
    </location>
</feature>
<feature type="repeat" description="WD 2">
    <location>
        <begin position="146"/>
        <end position="187"/>
    </location>
</feature>
<feature type="repeat" description="WD 3">
    <location>
        <begin position="188"/>
        <end position="227"/>
    </location>
</feature>
<feature type="repeat" description="WD 4">
    <location>
        <begin position="230"/>
        <end position="269"/>
    </location>
</feature>
<feature type="repeat" description="WD 5">
    <location>
        <begin position="272"/>
        <end position="334"/>
    </location>
</feature>
<feature type="repeat" description="WD 6">
    <location>
        <begin position="337"/>
        <end position="376"/>
    </location>
</feature>
<feature type="repeat" description="WD 7">
    <location>
        <begin position="379"/>
        <end position="411"/>
    </location>
</feature>
<feature type="region of interest" description="Disordered" evidence="2">
    <location>
        <begin position="77"/>
        <end position="96"/>
    </location>
</feature>
<feature type="coiled-coil region" evidence="1">
    <location>
        <begin position="54"/>
        <end position="80"/>
    </location>
</feature>
<feature type="compositionally biased region" description="Basic and acidic residues" evidence="2">
    <location>
        <begin position="77"/>
        <end position="89"/>
    </location>
</feature>
<reference key="1">
    <citation type="submission" date="2008-03" db="EMBL/GenBank/DDBJ databases">
        <title>Annotation of Ixodes scapularis.</title>
        <authorList>
            <consortium name="Ixodes scapularis Genome Project Consortium"/>
            <person name="Caler E."/>
            <person name="Hannick L.I."/>
            <person name="Bidwell S."/>
            <person name="Joardar V."/>
            <person name="Thiagarajan M."/>
            <person name="Amedeo P."/>
            <person name="Galinsky K.J."/>
            <person name="Schobel S."/>
            <person name="Inman J."/>
            <person name="Hostetler J."/>
            <person name="Miller J."/>
            <person name="Hammond M."/>
            <person name="Megy K."/>
            <person name="Lawson D."/>
            <person name="Kodira C."/>
            <person name="Sutton G."/>
            <person name="Meyer J."/>
            <person name="Hill C.A."/>
            <person name="Birren B."/>
            <person name="Nene V."/>
            <person name="Collins F."/>
            <person name="Alarcon-Chaidez F."/>
            <person name="Wikel S."/>
            <person name="Strausberg R."/>
        </authorList>
    </citation>
    <scope>NUCLEOTIDE SEQUENCE [LARGE SCALE GENOMIC DNA]</scope>
    <source>
        <strain>Wikel</strain>
    </source>
</reference>